<feature type="signal peptide" evidence="2">
    <location>
        <begin position="1"/>
        <end position="30"/>
    </location>
</feature>
<feature type="chain" id="PRO_0000032368" description="Virulence sensor protein BvgS">
    <location>
        <begin position="31"/>
        <end position="1238"/>
    </location>
</feature>
<feature type="topological domain" description="Cytoplasmic" evidence="2">
    <location>
        <begin position="33"/>
        <end position="307"/>
    </location>
</feature>
<feature type="transmembrane region" description="Helical" evidence="2">
    <location>
        <begin position="308"/>
        <end position="331"/>
    </location>
</feature>
<feature type="topological domain" description="Periplasmic" evidence="2">
    <location>
        <begin position="332"/>
        <end position="541"/>
    </location>
</feature>
<feature type="transmembrane region" description="Helical" evidence="2">
    <location>
        <begin position="542"/>
        <end position="563"/>
    </location>
</feature>
<feature type="topological domain" description="Cytoplasmic" evidence="2">
    <location>
        <begin position="564"/>
        <end position="1238"/>
    </location>
</feature>
<feature type="domain" description="PAS" evidence="5">
    <location>
        <begin position="580"/>
        <end position="651"/>
    </location>
</feature>
<feature type="domain" description="PAC" evidence="6">
    <location>
        <begin position="652"/>
        <end position="708"/>
    </location>
</feature>
<feature type="domain" description="Histidine kinase" evidence="3">
    <location>
        <begin position="726"/>
        <end position="948"/>
    </location>
</feature>
<feature type="domain" description="Response regulatory" evidence="7">
    <location>
        <begin position="974"/>
        <end position="1095"/>
    </location>
</feature>
<feature type="domain" description="HPt" evidence="4">
    <location>
        <begin position="1133"/>
        <end position="1228"/>
    </location>
</feature>
<feature type="modified residue" description="Phosphohistidine; by autocatalysis" evidence="3">
    <location>
        <position position="729"/>
    </location>
</feature>
<feature type="modified residue" description="4-aspartylphosphate" evidence="7">
    <location>
        <position position="1023"/>
    </location>
</feature>
<feature type="modified residue" description="Phosphohistidine" evidence="4">
    <location>
        <position position="1172"/>
    </location>
</feature>
<feature type="sequence conflict" description="In Ref. 1; CAA41252." evidence="8" ref="1">
    <original>A</original>
    <variation>T</variation>
    <location>
        <position position="50"/>
    </location>
</feature>
<feature type="sequence conflict" description="In Ref. 1; CAA41252." evidence="8" ref="1">
    <original>M</original>
    <variation>L</variation>
    <location>
        <position position="395"/>
    </location>
</feature>
<feature type="sequence conflict" description="In Ref. 1; CAA41252." evidence="8" ref="1">
    <original>S</original>
    <variation>A</variation>
    <location>
        <position position="651"/>
    </location>
</feature>
<feature type="sequence conflict" description="In Ref. 1; CAA41252." evidence="8" ref="1">
    <original>A</original>
    <variation>S</variation>
    <location>
        <position position="1008"/>
    </location>
</feature>
<feature type="sequence conflict" description="In Ref. 1; CAA41252." evidence="8" ref="1">
    <original>QR</original>
    <variation>HA</variation>
    <location>
        <begin position="1067"/>
        <end position="1068"/>
    </location>
</feature>
<feature type="sequence conflict" description="In Ref. 1; CAA41252." evidence="8" ref="1">
    <original>L</original>
    <variation>V</variation>
    <location>
        <position position="1144"/>
    </location>
</feature>
<reference key="1">
    <citation type="journal article" date="1991" name="Mol. Microbiol.">
        <title>Structural and genetic analysis of the bvg locus in Bordetella species.</title>
        <authorList>
            <person name="Arico B."/>
            <person name="Scarlato V."/>
            <person name="Monack D.M."/>
            <person name="Falkow S."/>
            <person name="Rappuoli R."/>
        </authorList>
    </citation>
    <scope>NUCLEOTIDE SEQUENCE [GENOMIC DNA]</scope>
    <source>
        <strain>7865</strain>
    </source>
</reference>
<reference key="2">
    <citation type="journal article" date="2003" name="Nat. Genet.">
        <title>Comparative analysis of the genome sequences of Bordetella pertussis, Bordetella parapertussis and Bordetella bronchiseptica.</title>
        <authorList>
            <person name="Parkhill J."/>
            <person name="Sebaihia M."/>
            <person name="Preston A."/>
            <person name="Murphy L.D."/>
            <person name="Thomson N.R."/>
            <person name="Harris D.E."/>
            <person name="Holden M.T.G."/>
            <person name="Churcher C.M."/>
            <person name="Bentley S.D."/>
            <person name="Mungall K.L."/>
            <person name="Cerdeno-Tarraga A.-M."/>
            <person name="Temple L."/>
            <person name="James K.D."/>
            <person name="Harris B."/>
            <person name="Quail M.A."/>
            <person name="Achtman M."/>
            <person name="Atkin R."/>
            <person name="Baker S."/>
            <person name="Basham D."/>
            <person name="Bason N."/>
            <person name="Cherevach I."/>
            <person name="Chillingworth T."/>
            <person name="Collins M."/>
            <person name="Cronin A."/>
            <person name="Davis P."/>
            <person name="Doggett J."/>
            <person name="Feltwell T."/>
            <person name="Goble A."/>
            <person name="Hamlin N."/>
            <person name="Hauser H."/>
            <person name="Holroyd S."/>
            <person name="Jagels K."/>
            <person name="Leather S."/>
            <person name="Moule S."/>
            <person name="Norberczak H."/>
            <person name="O'Neil S."/>
            <person name="Ormond D."/>
            <person name="Price C."/>
            <person name="Rabbinowitsch E."/>
            <person name="Rutter S."/>
            <person name="Sanders M."/>
            <person name="Saunders D."/>
            <person name="Seeger K."/>
            <person name="Sharp S."/>
            <person name="Simmonds M."/>
            <person name="Skelton J."/>
            <person name="Squares R."/>
            <person name="Squares S."/>
            <person name="Stevens K."/>
            <person name="Unwin L."/>
            <person name="Whitehead S."/>
            <person name="Barrell B.G."/>
            <person name="Maskell D.J."/>
        </authorList>
    </citation>
    <scope>NUCLEOTIDE SEQUENCE [LARGE SCALE GENOMIC DNA]</scope>
    <source>
        <strain>ATCC BAA-588 / NCTC 13252 / RB50</strain>
    </source>
</reference>
<comment type="function">
    <text evidence="1">Member of the two-component regulatory system BvgS/BvgA. Phosphorylates BvgA via a four-step phosphorelay in response to environmental signals (By similarity).</text>
</comment>
<comment type="catalytic activity">
    <reaction>
        <text>ATP + protein L-histidine = ADP + protein N-phospho-L-histidine.</text>
        <dbReference type="EC" id="2.7.13.3"/>
    </reaction>
</comment>
<comment type="subcellular location">
    <subcellularLocation>
        <location evidence="8">Cell inner membrane</location>
        <topology evidence="8">Multi-pass membrane protein</topology>
    </subcellularLocation>
</comment>
<comment type="PTM">
    <text evidence="1">Activation requires a sequential transfer of a phosphate group from a His in the primary transmitter domain, to an Asp in the receiver domain and to a His in the secondary transmitter domain.</text>
</comment>
<evidence type="ECO:0000250" key="1"/>
<evidence type="ECO:0000255" key="2"/>
<evidence type="ECO:0000255" key="3">
    <source>
        <dbReference type="PROSITE-ProRule" id="PRU00107"/>
    </source>
</evidence>
<evidence type="ECO:0000255" key="4">
    <source>
        <dbReference type="PROSITE-ProRule" id="PRU00110"/>
    </source>
</evidence>
<evidence type="ECO:0000255" key="5">
    <source>
        <dbReference type="PROSITE-ProRule" id="PRU00140"/>
    </source>
</evidence>
<evidence type="ECO:0000255" key="6">
    <source>
        <dbReference type="PROSITE-ProRule" id="PRU00141"/>
    </source>
</evidence>
<evidence type="ECO:0000255" key="7">
    <source>
        <dbReference type="PROSITE-ProRule" id="PRU00169"/>
    </source>
</evidence>
<evidence type="ECO:0000305" key="8"/>
<keyword id="KW-0067">ATP-binding</keyword>
<keyword id="KW-0997">Cell inner membrane</keyword>
<keyword id="KW-1003">Cell membrane</keyword>
<keyword id="KW-0418">Kinase</keyword>
<keyword id="KW-0472">Membrane</keyword>
<keyword id="KW-0547">Nucleotide-binding</keyword>
<keyword id="KW-0597">Phosphoprotein</keyword>
<keyword id="KW-0732">Signal</keyword>
<keyword id="KW-0808">Transferase</keyword>
<keyword id="KW-0812">Transmembrane</keyword>
<keyword id="KW-1133">Transmembrane helix</keyword>
<keyword id="KW-0902">Two-component regulatory system</keyword>
<keyword id="KW-0843">Virulence</keyword>
<protein>
    <recommendedName>
        <fullName>Virulence sensor protein BvgS</fullName>
        <ecNumber>2.7.13.3</ecNumber>
    </recommendedName>
</protein>
<gene>
    <name type="primary">bvgS</name>
    <name type="ordered locus">BB2995</name>
</gene>
<dbReference type="EC" id="2.7.13.3"/>
<dbReference type="EMBL" id="X58355">
    <property type="protein sequence ID" value="CAA41252.1"/>
    <property type="molecule type" value="Genomic_DNA"/>
</dbReference>
<dbReference type="EMBL" id="BX640446">
    <property type="protein sequence ID" value="CAE33487.1"/>
    <property type="molecule type" value="Genomic_DNA"/>
</dbReference>
<dbReference type="PIR" id="S17944">
    <property type="entry name" value="S17944"/>
</dbReference>
<dbReference type="RefSeq" id="WP_010926708.1">
    <property type="nucleotide sequence ID" value="NC_002927.3"/>
</dbReference>
<dbReference type="SMR" id="P26762"/>
<dbReference type="KEGG" id="bbr:BB2995"/>
<dbReference type="eggNOG" id="COG0834">
    <property type="taxonomic scope" value="Bacteria"/>
</dbReference>
<dbReference type="eggNOG" id="COG2205">
    <property type="taxonomic scope" value="Bacteria"/>
</dbReference>
<dbReference type="HOGENOM" id="CLU_000445_37_3_4"/>
<dbReference type="BRENDA" id="2.7.13.3">
    <property type="organism ID" value="227"/>
</dbReference>
<dbReference type="Proteomes" id="UP000001027">
    <property type="component" value="Chromosome"/>
</dbReference>
<dbReference type="GO" id="GO:0005886">
    <property type="term" value="C:plasma membrane"/>
    <property type="evidence" value="ECO:0007669"/>
    <property type="project" value="UniProtKB-SubCell"/>
</dbReference>
<dbReference type="GO" id="GO:0005524">
    <property type="term" value="F:ATP binding"/>
    <property type="evidence" value="ECO:0007669"/>
    <property type="project" value="UniProtKB-KW"/>
</dbReference>
<dbReference type="GO" id="GO:0009927">
    <property type="term" value="F:histidine phosphotransfer kinase activity"/>
    <property type="evidence" value="ECO:0007669"/>
    <property type="project" value="TreeGrafter"/>
</dbReference>
<dbReference type="GO" id="GO:0000155">
    <property type="term" value="F:phosphorelay sensor kinase activity"/>
    <property type="evidence" value="ECO:0007669"/>
    <property type="project" value="InterPro"/>
</dbReference>
<dbReference type="GO" id="GO:0006355">
    <property type="term" value="P:regulation of DNA-templated transcription"/>
    <property type="evidence" value="ECO:0007669"/>
    <property type="project" value="InterPro"/>
</dbReference>
<dbReference type="CDD" id="cd16922">
    <property type="entry name" value="HATPase_EvgS-ArcB-TorS-like"/>
    <property type="match status" value="1"/>
</dbReference>
<dbReference type="CDD" id="cd00082">
    <property type="entry name" value="HisKA"/>
    <property type="match status" value="1"/>
</dbReference>
<dbReference type="CDD" id="cd00088">
    <property type="entry name" value="HPT"/>
    <property type="match status" value="1"/>
</dbReference>
<dbReference type="CDD" id="cd00130">
    <property type="entry name" value="PAS"/>
    <property type="match status" value="1"/>
</dbReference>
<dbReference type="CDD" id="cd13705">
    <property type="entry name" value="PBP2_BvgS_D1"/>
    <property type="match status" value="1"/>
</dbReference>
<dbReference type="CDD" id="cd13707">
    <property type="entry name" value="PBP2_BvgS_D2"/>
    <property type="match status" value="1"/>
</dbReference>
<dbReference type="CDD" id="cd17546">
    <property type="entry name" value="REC_hyHK_CKI1_RcsC-like"/>
    <property type="match status" value="1"/>
</dbReference>
<dbReference type="FunFam" id="3.30.565.10:FF:000010">
    <property type="entry name" value="Sensor histidine kinase RcsC"/>
    <property type="match status" value="1"/>
</dbReference>
<dbReference type="Gene3D" id="1.10.287.130">
    <property type="match status" value="1"/>
</dbReference>
<dbReference type="Gene3D" id="3.40.50.2300">
    <property type="match status" value="1"/>
</dbReference>
<dbReference type="Gene3D" id="3.30.565.10">
    <property type="entry name" value="Histidine kinase-like ATPase, C-terminal domain"/>
    <property type="match status" value="1"/>
</dbReference>
<dbReference type="Gene3D" id="1.20.120.160">
    <property type="entry name" value="HPT domain"/>
    <property type="match status" value="1"/>
</dbReference>
<dbReference type="Gene3D" id="3.30.450.20">
    <property type="entry name" value="PAS domain"/>
    <property type="match status" value="1"/>
</dbReference>
<dbReference type="Gene3D" id="3.40.190.10">
    <property type="entry name" value="Periplasmic binding protein-like II"/>
    <property type="match status" value="4"/>
</dbReference>
<dbReference type="InterPro" id="IPR049870">
    <property type="entry name" value="BvgS-like_periplasmic1"/>
</dbReference>
<dbReference type="InterPro" id="IPR049871">
    <property type="entry name" value="BvgS-like_periplasmic2"/>
</dbReference>
<dbReference type="InterPro" id="IPR011006">
    <property type="entry name" value="CheY-like_superfamily"/>
</dbReference>
<dbReference type="InterPro" id="IPR036890">
    <property type="entry name" value="HATPase_C_sf"/>
</dbReference>
<dbReference type="InterPro" id="IPR005467">
    <property type="entry name" value="His_kinase_dom"/>
</dbReference>
<dbReference type="InterPro" id="IPR003661">
    <property type="entry name" value="HisK_dim/P_dom"/>
</dbReference>
<dbReference type="InterPro" id="IPR036097">
    <property type="entry name" value="HisK_dim/P_sf"/>
</dbReference>
<dbReference type="InterPro" id="IPR036641">
    <property type="entry name" value="HPT_dom_sf"/>
</dbReference>
<dbReference type="InterPro" id="IPR000014">
    <property type="entry name" value="PAS"/>
</dbReference>
<dbReference type="InterPro" id="IPR000700">
    <property type="entry name" value="PAS-assoc_C"/>
</dbReference>
<dbReference type="InterPro" id="IPR035965">
    <property type="entry name" value="PAS-like_dom_sf"/>
</dbReference>
<dbReference type="InterPro" id="IPR013767">
    <property type="entry name" value="PAS_fold"/>
</dbReference>
<dbReference type="InterPro" id="IPR004358">
    <property type="entry name" value="Sig_transdc_His_kin-like_C"/>
</dbReference>
<dbReference type="InterPro" id="IPR008207">
    <property type="entry name" value="Sig_transdc_His_kin_Hpt_dom"/>
</dbReference>
<dbReference type="InterPro" id="IPR001789">
    <property type="entry name" value="Sig_transdc_resp-reg_receiver"/>
</dbReference>
<dbReference type="InterPro" id="IPR001638">
    <property type="entry name" value="Solute-binding_3/MltF_N"/>
</dbReference>
<dbReference type="NCBIfam" id="TIGR00229">
    <property type="entry name" value="sensory_box"/>
    <property type="match status" value="1"/>
</dbReference>
<dbReference type="PANTHER" id="PTHR43047:SF72">
    <property type="entry name" value="OSMOSENSING HISTIDINE PROTEIN KINASE SLN1"/>
    <property type="match status" value="1"/>
</dbReference>
<dbReference type="PANTHER" id="PTHR43047">
    <property type="entry name" value="TWO-COMPONENT HISTIDINE PROTEIN KINASE"/>
    <property type="match status" value="1"/>
</dbReference>
<dbReference type="Pfam" id="PF02518">
    <property type="entry name" value="HATPase_c"/>
    <property type="match status" value="1"/>
</dbReference>
<dbReference type="Pfam" id="PF00512">
    <property type="entry name" value="HisKA"/>
    <property type="match status" value="1"/>
</dbReference>
<dbReference type="Pfam" id="PF01627">
    <property type="entry name" value="Hpt"/>
    <property type="match status" value="1"/>
</dbReference>
<dbReference type="Pfam" id="PF00989">
    <property type="entry name" value="PAS"/>
    <property type="match status" value="1"/>
</dbReference>
<dbReference type="Pfam" id="PF00072">
    <property type="entry name" value="Response_reg"/>
    <property type="match status" value="1"/>
</dbReference>
<dbReference type="Pfam" id="PF00497">
    <property type="entry name" value="SBP_bac_3"/>
    <property type="match status" value="2"/>
</dbReference>
<dbReference type="PRINTS" id="PR00344">
    <property type="entry name" value="BCTRLSENSOR"/>
</dbReference>
<dbReference type="SMART" id="SM00387">
    <property type="entry name" value="HATPase_c"/>
    <property type="match status" value="1"/>
</dbReference>
<dbReference type="SMART" id="SM00388">
    <property type="entry name" value="HisKA"/>
    <property type="match status" value="1"/>
</dbReference>
<dbReference type="SMART" id="SM00073">
    <property type="entry name" value="HPT"/>
    <property type="match status" value="1"/>
</dbReference>
<dbReference type="SMART" id="SM00091">
    <property type="entry name" value="PAS"/>
    <property type="match status" value="1"/>
</dbReference>
<dbReference type="SMART" id="SM00062">
    <property type="entry name" value="PBPb"/>
    <property type="match status" value="2"/>
</dbReference>
<dbReference type="SMART" id="SM00448">
    <property type="entry name" value="REC"/>
    <property type="match status" value="1"/>
</dbReference>
<dbReference type="SUPFAM" id="SSF55874">
    <property type="entry name" value="ATPase domain of HSP90 chaperone/DNA topoisomerase II/histidine kinase"/>
    <property type="match status" value="1"/>
</dbReference>
<dbReference type="SUPFAM" id="SSF52172">
    <property type="entry name" value="CheY-like"/>
    <property type="match status" value="1"/>
</dbReference>
<dbReference type="SUPFAM" id="SSF47226">
    <property type="entry name" value="Histidine-containing phosphotransfer domain, HPT domain"/>
    <property type="match status" value="1"/>
</dbReference>
<dbReference type="SUPFAM" id="SSF47384">
    <property type="entry name" value="Homodimeric domain of signal transducing histidine kinase"/>
    <property type="match status" value="1"/>
</dbReference>
<dbReference type="SUPFAM" id="SSF53850">
    <property type="entry name" value="Periplasmic binding protein-like II"/>
    <property type="match status" value="2"/>
</dbReference>
<dbReference type="SUPFAM" id="SSF55785">
    <property type="entry name" value="PYP-like sensor domain (PAS domain)"/>
    <property type="match status" value="1"/>
</dbReference>
<dbReference type="PROSITE" id="PS50109">
    <property type="entry name" value="HIS_KIN"/>
    <property type="match status" value="1"/>
</dbReference>
<dbReference type="PROSITE" id="PS50894">
    <property type="entry name" value="HPT"/>
    <property type="match status" value="1"/>
</dbReference>
<dbReference type="PROSITE" id="PS50113">
    <property type="entry name" value="PAC"/>
    <property type="match status" value="1"/>
</dbReference>
<dbReference type="PROSITE" id="PS50112">
    <property type="entry name" value="PAS"/>
    <property type="match status" value="1"/>
</dbReference>
<dbReference type="PROSITE" id="PS50110">
    <property type="entry name" value="RESPONSE_REGULATORY"/>
    <property type="match status" value="1"/>
</dbReference>
<organism>
    <name type="scientific">Bordetella bronchiseptica (strain ATCC BAA-588 / NCTC 13252 / RB50)</name>
    <name type="common">Alcaligenes bronchisepticus</name>
    <dbReference type="NCBI Taxonomy" id="257310"/>
    <lineage>
        <taxon>Bacteria</taxon>
        <taxon>Pseudomonadati</taxon>
        <taxon>Pseudomonadota</taxon>
        <taxon>Betaproteobacteria</taxon>
        <taxon>Burkholderiales</taxon>
        <taxon>Alcaligenaceae</taxon>
        <taxon>Bordetella</taxon>
    </lineage>
</organism>
<proteinExistence type="inferred from homology"/>
<accession>P26762</accession>
<name>BVGS_BORBR</name>
<sequence length="1238" mass="134811">MPAPHRLYPRSLICLAQALLAWALLAWAPAQASQELTLVGKAAVPDVEIALDGDDWRWLARKRVLTLGVYAPDIPPFDVTYDERYEGLTADYMAIIAHNLGVQAKVLRYPTREQAVGALESGQIDLIGTVNGIEGRLQSLRLSVPYAADHPVLVMPIGARRAPPADLAGQRLAVDANYLPRETLQQAYPQATLHYFPSSEQALAAVAYGQADVFIGDALTTSHLVSQSYFNDVRVVAPAQIVTGGESFGVRADNTRLLRVVNAVLEAIPASERRSLIYRWGLGSSISLDFARPAYSAREQQWMANHPVVKVAVLNLFAPFTLFRTDEQFGGISAAVLQLLQLRTGLDFQIIGVDTVEELIAKLRSGEADMAGALFVNAARESVLSFSRPYVRNGMVIVTRQDPAAPADADHLDGRTIAMVRNSAAIPLLQQRYPQAKVVTADNPTEAMLLVADGQADAVVQTQISASYYVNRYFAGKLRIASALDLPPAEIALATARGQTELISILNKALYSISNDELASIVSRWRGSDGDPRTWYAYRNEIYLLIGLGLLSALLFLSWIVYLRRQIRQRKRAERALNDQLEFMRVLIDGTPNPIYVRDKEGRMLLCNDAYLDTFGVTADAVLGKTIPEANVVGDPALAREMHEFLLTRMSAEREPRFEDRDVTLHGRTRHVYQWTVPYGDSLGELKGIIGGWIDITERAELLRELHDAKESADAANRAKTTFLATMSHEIRTPMNAIIGMLELALLRPADQEPDRQSIQVAYDSARSLLELIGDILDIAKIEAGKFDLAPVRTALRALPEGAIRVFDGLARQKGIELVLKTDIVGVDDVLIDPLRMKQVLSNLVGNAIKFTTEGQVVLTVTARPDGEAAHVQFSVSDTGCGISEADQRQLFKPFSQVGGSAEAGPAPGTGLGLSISRRLVELMGGTLVMRSAPGVGTTVSVDLRLTMVEKSAQATPPAAAAQATPSKPQVSLRVLVVDDHKPNLMLLRQQLDYLGQRVVAADSGEAALALWHEHAFDVVITDCNMPGINGYELARRIRAAEAAPGYGRTRCILFGFTASAQMDEAQRCRAAGMDDCLFKPIGVDALRQRLNEAAARAALPTPPSPQAAAPATHDATPAAFSAESILALTQNDEALIRQLLEELIRTNRADVDQLQKLHQQADWPKVSDMAHRLAGGARVVDAKAMIDTALALEKKAQGQAGPSPEIDGMVRTLAAQSAALETQLRAWLEQRPHQGQP</sequence>